<accession>Q95LG8</accession>
<reference key="1">
    <citation type="submission" date="2000-08" db="EMBL/GenBank/DDBJ databases">
        <title>Excessive hand-wringing in a MPTP-treated monkey.</title>
        <authorList>
            <person name="Muramatsu S."/>
        </authorList>
    </citation>
    <scope>NUCLEOTIDE SEQUENCE [MRNA]</scope>
</reference>
<dbReference type="EMBL" id="AF295597">
    <property type="protein sequence ID" value="AAK97131.1"/>
    <property type="molecule type" value="mRNA"/>
</dbReference>
<dbReference type="RefSeq" id="NP_001271476.1">
    <property type="nucleotide sequence ID" value="NM_001284547.1"/>
</dbReference>
<dbReference type="RefSeq" id="XP_045239696.1">
    <property type="nucleotide sequence ID" value="XM_045383761.2"/>
</dbReference>
<dbReference type="BMRB" id="Q95LG8"/>
<dbReference type="SMR" id="Q95LG8"/>
<dbReference type="STRING" id="9541.ENSMFAP00000020601"/>
<dbReference type="Ensembl" id="ENSMFAT00000035479.2">
    <property type="protein sequence ID" value="ENSMFAP00000020503.2"/>
    <property type="gene ID" value="ENSMFAG00000033178.2"/>
</dbReference>
<dbReference type="GeneID" id="102135563"/>
<dbReference type="VEuPathDB" id="HostDB:ENSMFAG00000033178"/>
<dbReference type="eggNOG" id="KOG4161">
    <property type="taxonomic scope" value="Eukaryota"/>
</dbReference>
<dbReference type="GeneTree" id="ENSGT00530000063687"/>
<dbReference type="Proteomes" id="UP000233100">
    <property type="component" value="Chromosome X"/>
</dbReference>
<dbReference type="Bgee" id="ENSMFAG00000033178">
    <property type="expression patterns" value="Expressed in skeletal muscle tissue and 13 other cell types or tissues"/>
</dbReference>
<dbReference type="GO" id="GO:0000792">
    <property type="term" value="C:heterochromatin"/>
    <property type="evidence" value="ECO:0007669"/>
    <property type="project" value="TreeGrafter"/>
</dbReference>
<dbReference type="GO" id="GO:0005634">
    <property type="term" value="C:nucleus"/>
    <property type="evidence" value="ECO:0007669"/>
    <property type="project" value="UniProtKB-SubCell"/>
</dbReference>
<dbReference type="GO" id="GO:0003682">
    <property type="term" value="F:chromatin binding"/>
    <property type="evidence" value="ECO:0007669"/>
    <property type="project" value="TreeGrafter"/>
</dbReference>
<dbReference type="GO" id="GO:0010385">
    <property type="term" value="F:double-stranded methylated DNA binding"/>
    <property type="evidence" value="ECO:0007669"/>
    <property type="project" value="InterPro"/>
</dbReference>
<dbReference type="GO" id="GO:0008327">
    <property type="term" value="F:methyl-CpG binding"/>
    <property type="evidence" value="ECO:0007669"/>
    <property type="project" value="TreeGrafter"/>
</dbReference>
<dbReference type="GO" id="GO:0000122">
    <property type="term" value="P:negative regulation of transcription by RNA polymerase II"/>
    <property type="evidence" value="ECO:0007669"/>
    <property type="project" value="InterPro"/>
</dbReference>
<dbReference type="CDD" id="cd01396">
    <property type="entry name" value="MeCP2_MBD"/>
    <property type="match status" value="1"/>
</dbReference>
<dbReference type="FunFam" id="3.30.890.10:FF:000004">
    <property type="entry name" value="Methyl-CpG-binding protein 2"/>
    <property type="match status" value="1"/>
</dbReference>
<dbReference type="Gene3D" id="3.30.890.10">
    <property type="entry name" value="Methyl-cpg-binding Protein 2, Chain A"/>
    <property type="match status" value="1"/>
</dbReference>
<dbReference type="InterPro" id="IPR016177">
    <property type="entry name" value="DNA-bd_dom_sf"/>
</dbReference>
<dbReference type="InterPro" id="IPR017353">
    <property type="entry name" value="Me_CpG-bd_MeCP2"/>
</dbReference>
<dbReference type="InterPro" id="IPR045138">
    <property type="entry name" value="MeCP2/MBD4"/>
</dbReference>
<dbReference type="InterPro" id="IPR001739">
    <property type="entry name" value="Methyl_CpG_DNA-bd"/>
</dbReference>
<dbReference type="PANTHER" id="PTHR15074">
    <property type="entry name" value="METHYL-CPG-BINDING PROTEIN"/>
    <property type="match status" value="1"/>
</dbReference>
<dbReference type="PANTHER" id="PTHR15074:SF6">
    <property type="entry name" value="METHYL-CPG-BINDING PROTEIN 2"/>
    <property type="match status" value="1"/>
</dbReference>
<dbReference type="Pfam" id="PF01429">
    <property type="entry name" value="MBD"/>
    <property type="match status" value="1"/>
</dbReference>
<dbReference type="PIRSF" id="PIRSF038006">
    <property type="entry name" value="Methyl_CpG_bd_MeCP2"/>
    <property type="match status" value="1"/>
</dbReference>
<dbReference type="SMART" id="SM00391">
    <property type="entry name" value="MBD"/>
    <property type="match status" value="1"/>
</dbReference>
<dbReference type="SUPFAM" id="SSF54171">
    <property type="entry name" value="DNA-binding domain"/>
    <property type="match status" value="1"/>
</dbReference>
<dbReference type="PROSITE" id="PS50982">
    <property type="entry name" value="MBD"/>
    <property type="match status" value="1"/>
</dbReference>
<feature type="chain" id="PRO_0000096346" description="Methyl-CpG-binding protein 2">
    <location>
        <begin position="1"/>
        <end position="486"/>
    </location>
</feature>
<feature type="domain" description="MBD" evidence="5">
    <location>
        <begin position="90"/>
        <end position="162"/>
    </location>
</feature>
<feature type="DNA-binding region" description="A.T hook 1">
    <location>
        <begin position="185"/>
        <end position="197"/>
    </location>
</feature>
<feature type="DNA-binding region" description="A.T hook 2">
    <location>
        <begin position="265"/>
        <end position="277"/>
    </location>
</feature>
<feature type="region of interest" description="Disordered" evidence="6">
    <location>
        <begin position="1"/>
        <end position="120"/>
    </location>
</feature>
<feature type="region of interest" description="Disordered" evidence="6">
    <location>
        <begin position="147"/>
        <end position="275"/>
    </location>
</feature>
<feature type="region of interest" description="Interaction with NCOR2" evidence="4">
    <location>
        <begin position="269"/>
        <end position="309"/>
    </location>
</feature>
<feature type="region of interest" description="Interaction with TBL1XR1" evidence="4">
    <location>
        <begin position="285"/>
        <end position="309"/>
    </location>
</feature>
<feature type="region of interest" description="Disordered" evidence="6">
    <location>
        <begin position="324"/>
        <end position="486"/>
    </location>
</feature>
<feature type="compositionally biased region" description="Basic and acidic residues" evidence="6">
    <location>
        <begin position="34"/>
        <end position="45"/>
    </location>
</feature>
<feature type="compositionally biased region" description="Basic and acidic residues" evidence="6">
    <location>
        <begin position="52"/>
        <end position="64"/>
    </location>
</feature>
<feature type="compositionally biased region" description="Low complexity" evidence="6">
    <location>
        <begin position="68"/>
        <end position="81"/>
    </location>
</feature>
<feature type="compositionally biased region" description="Low complexity" evidence="6">
    <location>
        <begin position="352"/>
        <end position="361"/>
    </location>
</feature>
<feature type="compositionally biased region" description="Pro residues" evidence="6">
    <location>
        <begin position="378"/>
        <end position="393"/>
    </location>
</feature>
<feature type="compositionally biased region" description="Low complexity" evidence="6">
    <location>
        <begin position="435"/>
        <end position="447"/>
    </location>
</feature>
<feature type="modified residue" description="Phosphoserine" evidence="3">
    <location>
        <position position="13"/>
    </location>
</feature>
<feature type="modified residue" description="Phosphoserine" evidence="2">
    <location>
        <position position="80"/>
    </location>
</feature>
<feature type="modified residue" description="Phosphoserine" evidence="2">
    <location>
        <position position="116"/>
    </location>
</feature>
<feature type="modified residue" description="Omega-N-methylarginine" evidence="4">
    <location>
        <position position="162"/>
    </location>
</feature>
<feature type="modified residue" description="Phosphoserine" evidence="2">
    <location>
        <position position="216"/>
    </location>
</feature>
<feature type="modified residue" description="Phosphoserine" evidence="2">
    <location>
        <position position="229"/>
    </location>
</feature>
<feature type="modified residue" description="N6-acetyllysine" evidence="4">
    <location>
        <position position="321"/>
    </location>
</feature>
<feature type="modified residue" description="Phosphoserine" evidence="4">
    <location>
        <position position="423"/>
    </location>
</feature>
<feature type="modified residue" description="Phosphoserine" evidence="2">
    <location>
        <position position="426"/>
    </location>
</feature>
<feature type="modified residue" description="N6-acetyllysine" evidence="2">
    <location>
        <position position="449"/>
    </location>
</feature>
<proteinExistence type="evidence at transcript level"/>
<comment type="function">
    <text evidence="4">Chromosomal protein that binds to methylated DNA. It can bind specifically to a single methyl-CpG pair. It is not influenced by sequences flanking the methyl-CpGs. Mediates transcriptional repression through interaction with histone deacetylase and the corepressor SIN3A. Binds both 5-methylcytosine (5mC) and 5-hydroxymethylcytosine (5hmC)-containing DNA, with a preference for 5-methylcytosine (5mC).</text>
</comment>
<comment type="subunit">
    <text evidence="2 4">Interacts with FNBP3. Interacts with CDKL5. Interacts with ATRX; MECP2 recruits ATRX to pericentric heterochromatin in neuronal cells. Interacts with NCOR2. Interacts with TBL1XR1; bridges interaction between MECP2 and NCOR1. Interacts with TBL1X; recruits TBL1X to the heterochromatin foci (By similarity).</text>
</comment>
<comment type="subcellular location">
    <subcellularLocation>
        <location evidence="4">Nucleus</location>
    </subcellularLocation>
    <text evidence="2">Colocalized with methyl-CpG in the genome. Colocalized with TBL1X to the heterochromatin foci.</text>
</comment>
<comment type="PTM">
    <text evidence="1">Phosphorylated on Ser-423 in brain upon synaptic activity, which attenuates its repressor activity and seems to regulate dendritic growth and spine maturation.</text>
</comment>
<keyword id="KW-0007">Acetylation</keyword>
<keyword id="KW-0238">DNA-binding</keyword>
<keyword id="KW-0488">Methylation</keyword>
<keyword id="KW-0539">Nucleus</keyword>
<keyword id="KW-0597">Phosphoprotein</keyword>
<keyword id="KW-1185">Reference proteome</keyword>
<keyword id="KW-0677">Repeat</keyword>
<keyword id="KW-0678">Repressor</keyword>
<keyword id="KW-0804">Transcription</keyword>
<keyword id="KW-0805">Transcription regulation</keyword>
<evidence type="ECO:0000250" key="1"/>
<evidence type="ECO:0000250" key="2">
    <source>
        <dbReference type="UniProtKB" id="P51608"/>
    </source>
</evidence>
<evidence type="ECO:0000250" key="3">
    <source>
        <dbReference type="UniProtKB" id="Q00566"/>
    </source>
</evidence>
<evidence type="ECO:0000250" key="4">
    <source>
        <dbReference type="UniProtKB" id="Q9Z2D6"/>
    </source>
</evidence>
<evidence type="ECO:0000255" key="5">
    <source>
        <dbReference type="PROSITE-ProRule" id="PRU00338"/>
    </source>
</evidence>
<evidence type="ECO:0000256" key="6">
    <source>
        <dbReference type="SAM" id="MobiDB-lite"/>
    </source>
</evidence>
<organism>
    <name type="scientific">Macaca fascicularis</name>
    <name type="common">Crab-eating macaque</name>
    <name type="synonym">Cynomolgus monkey</name>
    <dbReference type="NCBI Taxonomy" id="9541"/>
    <lineage>
        <taxon>Eukaryota</taxon>
        <taxon>Metazoa</taxon>
        <taxon>Chordata</taxon>
        <taxon>Craniata</taxon>
        <taxon>Vertebrata</taxon>
        <taxon>Euteleostomi</taxon>
        <taxon>Mammalia</taxon>
        <taxon>Eutheria</taxon>
        <taxon>Euarchontoglires</taxon>
        <taxon>Primates</taxon>
        <taxon>Haplorrhini</taxon>
        <taxon>Catarrhini</taxon>
        <taxon>Cercopithecidae</taxon>
        <taxon>Cercopithecinae</taxon>
        <taxon>Macaca</taxon>
    </lineage>
</organism>
<sequence length="486" mass="52427">MVAGMLGLREEKSEDQDLQGLKDKPLKFKKVKKDKKEDKEGKHEPVQPSAHHSAEPAEAGKAETSEGSGSAPAVPEASASPKQRRSIIRDRGPMYDDPTLPEGWTRKLKQRKSGRSAGKYDVYLINPQGKAFRSKVELIAYFEKVGDTSLDPNDFDFTVTGRGSPSRREQKPPKKPKSPKAPGTGRGRGRPKGSGTTRPKAATSEGVQVKRVLEKSPGKLLVKMPFQTSPGGKAEGGGATTSTQVMVIKRPGRKRKAEADPQAIPKKRGRKPGSVVAAAAAEAKKKAVKESSIRSVQETVLPIKKRKTRETVSIEVKEVVKPLLVSTLGEKSGKGLKTCKSPGRKSKESSPKGRSSSASSPPKKEHHHHHHHSESPKAPVPLLPPLPPPPPEPESSEDPTSPPEPQDLSSSVCKEEKMPRGGSLESDGCPKEPAKTQPAVATAATAAEKYKHRGEGERKDIVSSSMPRPNREEPVDSRTPVTERVS</sequence>
<gene>
    <name type="primary">MECP2</name>
</gene>
<protein>
    <recommendedName>
        <fullName>Methyl-CpG-binding protein 2</fullName>
        <shortName>MeCp-2 protein</shortName>
        <shortName>MeCp2</shortName>
    </recommendedName>
</protein>
<name>MECP2_MACFA</name>